<proteinExistence type="inferred from homology"/>
<organism>
    <name type="scientific">Salmonella paratyphi B (strain ATCC BAA-1250 / SPB7)</name>
    <dbReference type="NCBI Taxonomy" id="1016998"/>
    <lineage>
        <taxon>Bacteria</taxon>
        <taxon>Pseudomonadati</taxon>
        <taxon>Pseudomonadota</taxon>
        <taxon>Gammaproteobacteria</taxon>
        <taxon>Enterobacterales</taxon>
        <taxon>Enterobacteriaceae</taxon>
        <taxon>Salmonella</taxon>
    </lineage>
</organism>
<reference key="1">
    <citation type="submission" date="2007-11" db="EMBL/GenBank/DDBJ databases">
        <authorList>
            <consortium name="The Salmonella enterica serovar Paratyphi B Genome Sequencing Project"/>
            <person name="McClelland M."/>
            <person name="Sanderson E.K."/>
            <person name="Porwollik S."/>
            <person name="Spieth J."/>
            <person name="Clifton W.S."/>
            <person name="Fulton R."/>
            <person name="Cordes M."/>
            <person name="Wollam A."/>
            <person name="Shah N."/>
            <person name="Pepin K."/>
            <person name="Bhonagiri V."/>
            <person name="Nash W."/>
            <person name="Johnson M."/>
            <person name="Thiruvilangam P."/>
            <person name="Wilson R."/>
        </authorList>
    </citation>
    <scope>NUCLEOTIDE SEQUENCE [LARGE SCALE GENOMIC DNA]</scope>
    <source>
        <strain>ATCC BAA-1250 / SPB7</strain>
    </source>
</reference>
<sequence>MGKIIGIDLGTTNSCVAIMDGTQARVLENAEGDRTTPSIIAYTQDGETLVGQPAKRQAVTNPQNTLFAIKRLIGRRFQDEEVQRDVSIMPYKIIGADNGDAWLDVKGQKMAPPQISAEVLKKMKKTAEDYLGEPVTEAVITVPAYFNDAQRQATKDAGRIAGLEVKRIINEPTAAALAYGLDKEVGNRTIAVYDLGGGTFDISIIEIDEVDGEKTFEVLATNGDTHLGGEDFDTRLINYLVDEFKKDQGIDLRNDPLAMQRLKEAAEKAKIELSSAQQTDVNLPYITADATGPKHMNIKVTRAKLESLVEDLVNRSIEPLKVALQDAGLSVSDINDVILVGGQTRMPMVQKKVAEFFGKEPRKDVNPDEAVAIGAAVQGGVLTGDVKDVLLLDVTPLSLGIETMGGVMTPLITKNTTIPTKHSQVFSTAEDNQSAVTIHVLQGERKRASDNKSLGQFNLDGINPAPRGMPQIEVTFDIDADGILHVSAKDKNSGKEQKITIKASSGLNEEEIQKMVRDAEANAESDRKFEELVQTRNQGDHLLHSTRKQVEEAGDKLPADDKTAIESALNALETALKGEDKAAIEAKMQELAQVSQKLMEIAQQQHAQQQAGSADASANNAKDDDVVDAEFEEVKDKK</sequence>
<dbReference type="EMBL" id="CP000886">
    <property type="protein sequence ID" value="ABX65458.1"/>
    <property type="molecule type" value="Genomic_DNA"/>
</dbReference>
<dbReference type="RefSeq" id="WP_000516125.1">
    <property type="nucleotide sequence ID" value="NC_010102.1"/>
</dbReference>
<dbReference type="SMR" id="A9MXI2"/>
<dbReference type="KEGG" id="spq:SPAB_00014"/>
<dbReference type="PATRIC" id="fig|1016998.12.peg.13"/>
<dbReference type="HOGENOM" id="CLU_005965_2_1_6"/>
<dbReference type="BioCyc" id="SENT1016998:SPAB_RS00065-MONOMER"/>
<dbReference type="Proteomes" id="UP000008556">
    <property type="component" value="Chromosome"/>
</dbReference>
<dbReference type="GO" id="GO:0005524">
    <property type="term" value="F:ATP binding"/>
    <property type="evidence" value="ECO:0007669"/>
    <property type="project" value="UniProtKB-UniRule"/>
</dbReference>
<dbReference type="GO" id="GO:0140662">
    <property type="term" value="F:ATP-dependent protein folding chaperone"/>
    <property type="evidence" value="ECO:0007669"/>
    <property type="project" value="InterPro"/>
</dbReference>
<dbReference type="GO" id="GO:0051082">
    <property type="term" value="F:unfolded protein binding"/>
    <property type="evidence" value="ECO:0007669"/>
    <property type="project" value="InterPro"/>
</dbReference>
<dbReference type="CDD" id="cd10234">
    <property type="entry name" value="ASKHA_NBD_HSP70_DnaK-like"/>
    <property type="match status" value="1"/>
</dbReference>
<dbReference type="FunFam" id="2.60.34.10:FF:000014">
    <property type="entry name" value="Chaperone protein DnaK HSP70"/>
    <property type="match status" value="1"/>
</dbReference>
<dbReference type="FunFam" id="3.30.30.30:FF:000003">
    <property type="entry name" value="Heat shock protein 9"/>
    <property type="match status" value="1"/>
</dbReference>
<dbReference type="FunFam" id="1.20.1270.10:FF:000001">
    <property type="entry name" value="Molecular chaperone DnaK"/>
    <property type="match status" value="1"/>
</dbReference>
<dbReference type="FunFam" id="3.30.420.40:FF:000004">
    <property type="entry name" value="Molecular chaperone DnaK"/>
    <property type="match status" value="1"/>
</dbReference>
<dbReference type="FunFam" id="3.90.640.10:FF:000003">
    <property type="entry name" value="Molecular chaperone DnaK"/>
    <property type="match status" value="1"/>
</dbReference>
<dbReference type="Gene3D" id="1.20.1270.10">
    <property type="match status" value="1"/>
</dbReference>
<dbReference type="Gene3D" id="3.30.420.40">
    <property type="match status" value="2"/>
</dbReference>
<dbReference type="Gene3D" id="3.90.640.10">
    <property type="entry name" value="Actin, Chain A, domain 4"/>
    <property type="match status" value="1"/>
</dbReference>
<dbReference type="Gene3D" id="2.60.34.10">
    <property type="entry name" value="Substrate Binding Domain Of DNAk, Chain A, domain 1"/>
    <property type="match status" value="1"/>
</dbReference>
<dbReference type="HAMAP" id="MF_00332">
    <property type="entry name" value="DnaK"/>
    <property type="match status" value="1"/>
</dbReference>
<dbReference type="InterPro" id="IPR043129">
    <property type="entry name" value="ATPase_NBD"/>
</dbReference>
<dbReference type="InterPro" id="IPR012725">
    <property type="entry name" value="Chaperone_DnaK"/>
</dbReference>
<dbReference type="InterPro" id="IPR018181">
    <property type="entry name" value="Heat_shock_70_CS"/>
</dbReference>
<dbReference type="InterPro" id="IPR029048">
    <property type="entry name" value="HSP70_C_sf"/>
</dbReference>
<dbReference type="InterPro" id="IPR029047">
    <property type="entry name" value="HSP70_peptide-bd_sf"/>
</dbReference>
<dbReference type="InterPro" id="IPR013126">
    <property type="entry name" value="Hsp_70_fam"/>
</dbReference>
<dbReference type="NCBIfam" id="NF001413">
    <property type="entry name" value="PRK00290.1"/>
    <property type="match status" value="1"/>
</dbReference>
<dbReference type="NCBIfam" id="NF003520">
    <property type="entry name" value="PRK05183.1"/>
    <property type="match status" value="1"/>
</dbReference>
<dbReference type="NCBIfam" id="TIGR02350">
    <property type="entry name" value="prok_dnaK"/>
    <property type="match status" value="1"/>
</dbReference>
<dbReference type="PANTHER" id="PTHR19375">
    <property type="entry name" value="HEAT SHOCK PROTEIN 70KDA"/>
    <property type="match status" value="1"/>
</dbReference>
<dbReference type="Pfam" id="PF00012">
    <property type="entry name" value="HSP70"/>
    <property type="match status" value="1"/>
</dbReference>
<dbReference type="PRINTS" id="PR00301">
    <property type="entry name" value="HEATSHOCK70"/>
</dbReference>
<dbReference type="SUPFAM" id="SSF53067">
    <property type="entry name" value="Actin-like ATPase domain"/>
    <property type="match status" value="2"/>
</dbReference>
<dbReference type="SUPFAM" id="SSF100934">
    <property type="entry name" value="Heat shock protein 70kD (HSP70), C-terminal subdomain"/>
    <property type="match status" value="1"/>
</dbReference>
<dbReference type="SUPFAM" id="SSF100920">
    <property type="entry name" value="Heat shock protein 70kD (HSP70), peptide-binding domain"/>
    <property type="match status" value="1"/>
</dbReference>
<dbReference type="PROSITE" id="PS00297">
    <property type="entry name" value="HSP70_1"/>
    <property type="match status" value="1"/>
</dbReference>
<dbReference type="PROSITE" id="PS00329">
    <property type="entry name" value="HSP70_2"/>
    <property type="match status" value="1"/>
</dbReference>
<dbReference type="PROSITE" id="PS01036">
    <property type="entry name" value="HSP70_3"/>
    <property type="match status" value="1"/>
</dbReference>
<name>DNAK_SALPB</name>
<evidence type="ECO:0000255" key="1">
    <source>
        <dbReference type="HAMAP-Rule" id="MF_00332"/>
    </source>
</evidence>
<evidence type="ECO:0000256" key="2">
    <source>
        <dbReference type="SAM" id="MobiDB-lite"/>
    </source>
</evidence>
<feature type="chain" id="PRO_1000079242" description="Chaperone protein DnaK">
    <location>
        <begin position="1"/>
        <end position="638"/>
    </location>
</feature>
<feature type="region of interest" description="Disordered" evidence="2">
    <location>
        <begin position="603"/>
        <end position="638"/>
    </location>
</feature>
<feature type="compositionally biased region" description="Low complexity" evidence="2">
    <location>
        <begin position="603"/>
        <end position="620"/>
    </location>
</feature>
<feature type="modified residue" description="Phosphothreonine; by autocatalysis" evidence="1">
    <location>
        <position position="199"/>
    </location>
</feature>
<comment type="function">
    <text evidence="1">Acts as a chaperone.</text>
</comment>
<comment type="induction">
    <text evidence="1">By stress conditions e.g. heat shock.</text>
</comment>
<comment type="similarity">
    <text evidence="1">Belongs to the heat shock protein 70 family.</text>
</comment>
<gene>
    <name evidence="1" type="primary">dnaK</name>
    <name type="ordered locus">SPAB_00014</name>
</gene>
<protein>
    <recommendedName>
        <fullName evidence="1">Chaperone protein DnaK</fullName>
    </recommendedName>
    <alternativeName>
        <fullName evidence="1">HSP70</fullName>
    </alternativeName>
    <alternativeName>
        <fullName evidence="1">Heat shock 70 kDa protein</fullName>
    </alternativeName>
    <alternativeName>
        <fullName evidence="1">Heat shock protein 70</fullName>
    </alternativeName>
</protein>
<keyword id="KW-0067">ATP-binding</keyword>
<keyword id="KW-0143">Chaperone</keyword>
<keyword id="KW-0547">Nucleotide-binding</keyword>
<keyword id="KW-0597">Phosphoprotein</keyword>
<keyword id="KW-0346">Stress response</keyword>
<accession>A9MXI2</accession>